<keyword id="KW-0027">Amidation</keyword>
<keyword id="KW-1015">Disulfide bond</keyword>
<keyword id="KW-0872">Ion channel impairing toxin</keyword>
<keyword id="KW-0528">Neurotoxin</keyword>
<keyword id="KW-0964">Secreted</keyword>
<keyword id="KW-0732">Signal</keyword>
<keyword id="KW-0800">Toxin</keyword>
<keyword id="KW-0738">Voltage-gated sodium channel impairing toxin</keyword>
<feature type="signal peptide" evidence="1">
    <location>
        <begin position="1" status="less than"/>
        <end position="7"/>
    </location>
</feature>
<feature type="chain" id="PRO_0000253775" description="Toxin Td12">
    <location>
        <begin position="8"/>
        <end position="71"/>
    </location>
</feature>
<feature type="domain" description="LCN-type CS-alpha/beta" evidence="2">
    <location>
        <begin position="8"/>
        <end position="70"/>
    </location>
</feature>
<feature type="modified residue" description="Arginine amide" evidence="1">
    <location>
        <position position="71"/>
    </location>
</feature>
<feature type="disulfide bond" evidence="2">
    <location>
        <begin position="18"/>
        <end position="69"/>
    </location>
</feature>
<feature type="disulfide bond" evidence="2">
    <location>
        <begin position="22"/>
        <end position="44"/>
    </location>
</feature>
<feature type="disulfide bond" evidence="2">
    <location>
        <begin position="30"/>
        <end position="50"/>
    </location>
</feature>
<feature type="disulfide bond" evidence="2">
    <location>
        <begin position="34"/>
        <end position="52"/>
    </location>
</feature>
<feature type="non-terminal residue">
    <location>
        <position position="1"/>
    </location>
</feature>
<name>SCX12_TITDI</name>
<organism>
    <name type="scientific">Tityus discrepans</name>
    <name type="common">Venezuelan scorpion</name>
    <dbReference type="NCBI Taxonomy" id="57059"/>
    <lineage>
        <taxon>Eukaryota</taxon>
        <taxon>Metazoa</taxon>
        <taxon>Ecdysozoa</taxon>
        <taxon>Arthropoda</taxon>
        <taxon>Chelicerata</taxon>
        <taxon>Arachnida</taxon>
        <taxon>Scorpiones</taxon>
        <taxon>Buthida</taxon>
        <taxon>Buthoidea</taxon>
        <taxon>Buthidae</taxon>
        <taxon>Tityus</taxon>
    </lineage>
</organism>
<sequence length="73" mass="8318">IGMVIECKDGYLMEPNGCKRGCLTRPARYCANECSRVKGTDGYCYAWLACYCYNMPNWVKTWDRATNTCGRGK</sequence>
<comment type="function">
    <text evidence="1">Beta toxins bind voltage-independently at site-4 of sodium channels (Nav) and shift the voltage of activation toward more negative potentials thereby affecting sodium channel activation and promoting spontaneous and repetitive firing.</text>
</comment>
<comment type="subcellular location">
    <subcellularLocation>
        <location>Secreted</location>
    </subcellularLocation>
</comment>
<comment type="tissue specificity">
    <text>Expressed by the venom gland.</text>
</comment>
<comment type="domain">
    <text evidence="3">Has the structural arrangement of an alpha-helix connected to antiparallel beta-sheets by disulfide bonds (CS-alpha/beta).</text>
</comment>
<comment type="miscellaneous">
    <text evidence="1">Negative results: does not affect the cardiac Nav1.5/SCN5A, the peripheral nerve channel Nav1.7/SCN9A, and the voltage-dependent potassium channel Kv1.5/KCNA5.</text>
</comment>
<comment type="similarity">
    <text evidence="3">Belongs to the long (4 C-C) scorpion toxin superfamily. Sodium channel inhibitor family. Beta subfamily.</text>
</comment>
<dbReference type="EMBL" id="DQ075234">
    <property type="protein sequence ID" value="AAZ29713.1"/>
    <property type="molecule type" value="mRNA"/>
</dbReference>
<dbReference type="SMR" id="Q1I172"/>
<dbReference type="GO" id="GO:0005576">
    <property type="term" value="C:extracellular region"/>
    <property type="evidence" value="ECO:0007669"/>
    <property type="project" value="UniProtKB-SubCell"/>
</dbReference>
<dbReference type="GO" id="GO:0019871">
    <property type="term" value="F:sodium channel inhibitor activity"/>
    <property type="evidence" value="ECO:0007669"/>
    <property type="project" value="InterPro"/>
</dbReference>
<dbReference type="GO" id="GO:0090729">
    <property type="term" value="F:toxin activity"/>
    <property type="evidence" value="ECO:0007669"/>
    <property type="project" value="UniProtKB-KW"/>
</dbReference>
<dbReference type="GO" id="GO:0006952">
    <property type="term" value="P:defense response"/>
    <property type="evidence" value="ECO:0007669"/>
    <property type="project" value="InterPro"/>
</dbReference>
<dbReference type="CDD" id="cd23106">
    <property type="entry name" value="neurotoxins_LC_scorpion"/>
    <property type="match status" value="1"/>
</dbReference>
<dbReference type="FunFam" id="3.30.30.10:FF:000002">
    <property type="entry name" value="Alpha-like toxin BmK-M1"/>
    <property type="match status" value="1"/>
</dbReference>
<dbReference type="Gene3D" id="3.30.30.10">
    <property type="entry name" value="Knottin, scorpion toxin-like"/>
    <property type="match status" value="1"/>
</dbReference>
<dbReference type="InterPro" id="IPR044062">
    <property type="entry name" value="LCN-type_CS_alpha_beta_dom"/>
</dbReference>
<dbReference type="InterPro" id="IPR003614">
    <property type="entry name" value="Scorpion_toxin-like"/>
</dbReference>
<dbReference type="InterPro" id="IPR036574">
    <property type="entry name" value="Scorpion_toxin-like_sf"/>
</dbReference>
<dbReference type="InterPro" id="IPR018218">
    <property type="entry name" value="Scorpion_toxinL"/>
</dbReference>
<dbReference type="InterPro" id="IPR002061">
    <property type="entry name" value="Scorpion_toxinL/defensin"/>
</dbReference>
<dbReference type="Pfam" id="PF00537">
    <property type="entry name" value="Toxin_3"/>
    <property type="match status" value="1"/>
</dbReference>
<dbReference type="PRINTS" id="PR00285">
    <property type="entry name" value="SCORPNTOXIN"/>
</dbReference>
<dbReference type="SMART" id="SM00505">
    <property type="entry name" value="Knot1"/>
    <property type="match status" value="1"/>
</dbReference>
<dbReference type="SUPFAM" id="SSF57095">
    <property type="entry name" value="Scorpion toxin-like"/>
    <property type="match status" value="1"/>
</dbReference>
<dbReference type="PROSITE" id="PS51863">
    <property type="entry name" value="LCN_CSAB"/>
    <property type="match status" value="1"/>
</dbReference>
<accession>Q1I172</accession>
<proteinExistence type="evidence at transcript level"/>
<reference key="1">
    <citation type="journal article" date="2006" name="Comp. Biochem. Physiol.">
        <title>Diversity of long-chain toxins in Tityus zulianus and Tityus discrepans venoms (Scorpiones, Buthidae): molecular, immunological, and mass spectral analyses.</title>
        <authorList>
            <person name="Borges A."/>
            <person name="Garcia C.C."/>
            <person name="Lugo E."/>
            <person name="Alfonzo M.J."/>
            <person name="Jowers M.J."/>
            <person name="Op den Camp H.J.M."/>
        </authorList>
    </citation>
    <scope>NUCLEOTIDE SEQUENCE [MRNA]</scope>
    <source>
        <tissue>Venom gland</tissue>
    </source>
</reference>
<reference key="2">
    <citation type="journal article" date="2012" name="PLoS ONE">
        <title>Identification and phylogenetic analysis of Tityus pachyurus and Tityus obscurus novel putative Na+-channel scorpion toxins.</title>
        <authorList>
            <person name="Guerrero-Vargas J.A."/>
            <person name="Mourao C.B."/>
            <person name="Quintero-Hernandez V."/>
            <person name="Possani L.D."/>
            <person name="Schwartz E.F."/>
        </authorList>
    </citation>
    <scope>NOMENCLATURE</scope>
</reference>
<evidence type="ECO:0000250" key="1"/>
<evidence type="ECO:0000255" key="2">
    <source>
        <dbReference type="PROSITE-ProRule" id="PRU01210"/>
    </source>
</evidence>
<evidence type="ECO:0000305" key="3"/>
<protein>
    <recommendedName>
        <fullName>Toxin Td12</fullName>
    </recommendedName>
    <alternativeName>
        <fullName>T-beta* NaTx13.7</fullName>
    </alternativeName>
</protein>